<proteinExistence type="inferred from homology"/>
<sequence length="227" mass="25355">MEQPVGQPAYVLHSRAYKETSALVDFFTPQGRMRAVLRRARGKGGSLVRPFVLLELELRGRGELKNVGRMDSSGIAAWLHGDALFSGLYLNELLMRLLPAEAPFPAIFEHYTLTLQALAEGRPLEPLLRSFEWRLLDELGYAFSLSQDVNDQPIAADGLYRLRVDAGLERVELLQPGLFRGIELLALAEADWDAPGALLAAKRLMRQALAVHLGAKPLVSRELFRKR</sequence>
<comment type="function">
    <text evidence="1">Involved in DNA repair and RecF pathway recombination.</text>
</comment>
<comment type="similarity">
    <text evidence="1">Belongs to the RecO family.</text>
</comment>
<reference key="1">
    <citation type="submission" date="2007-05" db="EMBL/GenBank/DDBJ databases">
        <title>Complete sequence of Pseudomonas putida F1.</title>
        <authorList>
            <consortium name="US DOE Joint Genome Institute"/>
            <person name="Copeland A."/>
            <person name="Lucas S."/>
            <person name="Lapidus A."/>
            <person name="Barry K."/>
            <person name="Detter J.C."/>
            <person name="Glavina del Rio T."/>
            <person name="Hammon N."/>
            <person name="Israni S."/>
            <person name="Dalin E."/>
            <person name="Tice H."/>
            <person name="Pitluck S."/>
            <person name="Chain P."/>
            <person name="Malfatti S."/>
            <person name="Shin M."/>
            <person name="Vergez L."/>
            <person name="Schmutz J."/>
            <person name="Larimer F."/>
            <person name="Land M."/>
            <person name="Hauser L."/>
            <person name="Kyrpides N."/>
            <person name="Lykidis A."/>
            <person name="Parales R."/>
            <person name="Richardson P."/>
        </authorList>
    </citation>
    <scope>NUCLEOTIDE SEQUENCE [LARGE SCALE GENOMIC DNA]</scope>
    <source>
        <strain>ATCC 700007 / DSM 6899 / JCM 31910 / BCRC 17059 / LMG 24140 / F1</strain>
    </source>
</reference>
<evidence type="ECO:0000255" key="1">
    <source>
        <dbReference type="HAMAP-Rule" id="MF_00201"/>
    </source>
</evidence>
<protein>
    <recommendedName>
        <fullName evidence="1">DNA repair protein RecO</fullName>
    </recommendedName>
    <alternativeName>
        <fullName evidence="1">Recombination protein O</fullName>
    </alternativeName>
</protein>
<name>RECO_PSEP1</name>
<gene>
    <name evidence="1" type="primary">recO</name>
    <name type="ordered locus">Pput_4286</name>
</gene>
<accession>A5W8F0</accession>
<feature type="chain" id="PRO_1000012150" description="DNA repair protein RecO">
    <location>
        <begin position="1"/>
        <end position="227"/>
    </location>
</feature>
<organism>
    <name type="scientific">Pseudomonas putida (strain ATCC 700007 / DSM 6899 / JCM 31910 / BCRC 17059 / LMG 24140 / F1)</name>
    <dbReference type="NCBI Taxonomy" id="351746"/>
    <lineage>
        <taxon>Bacteria</taxon>
        <taxon>Pseudomonadati</taxon>
        <taxon>Pseudomonadota</taxon>
        <taxon>Gammaproteobacteria</taxon>
        <taxon>Pseudomonadales</taxon>
        <taxon>Pseudomonadaceae</taxon>
        <taxon>Pseudomonas</taxon>
    </lineage>
</organism>
<keyword id="KW-0227">DNA damage</keyword>
<keyword id="KW-0233">DNA recombination</keyword>
<keyword id="KW-0234">DNA repair</keyword>
<dbReference type="EMBL" id="CP000712">
    <property type="protein sequence ID" value="ABQ80410.1"/>
    <property type="molecule type" value="Genomic_DNA"/>
</dbReference>
<dbReference type="SMR" id="A5W8F0"/>
<dbReference type="KEGG" id="ppf:Pput_4286"/>
<dbReference type="eggNOG" id="COG1381">
    <property type="taxonomic scope" value="Bacteria"/>
</dbReference>
<dbReference type="HOGENOM" id="CLU_066645_1_0_6"/>
<dbReference type="GO" id="GO:0043590">
    <property type="term" value="C:bacterial nucleoid"/>
    <property type="evidence" value="ECO:0007669"/>
    <property type="project" value="TreeGrafter"/>
</dbReference>
<dbReference type="GO" id="GO:0006310">
    <property type="term" value="P:DNA recombination"/>
    <property type="evidence" value="ECO:0007669"/>
    <property type="project" value="UniProtKB-UniRule"/>
</dbReference>
<dbReference type="GO" id="GO:0006302">
    <property type="term" value="P:double-strand break repair"/>
    <property type="evidence" value="ECO:0007669"/>
    <property type="project" value="TreeGrafter"/>
</dbReference>
<dbReference type="Gene3D" id="2.40.50.140">
    <property type="entry name" value="Nucleic acid-binding proteins"/>
    <property type="match status" value="1"/>
</dbReference>
<dbReference type="Gene3D" id="1.20.1440.120">
    <property type="entry name" value="Recombination protein O, C-terminal domain"/>
    <property type="match status" value="1"/>
</dbReference>
<dbReference type="HAMAP" id="MF_00201">
    <property type="entry name" value="RecO"/>
    <property type="match status" value="1"/>
</dbReference>
<dbReference type="InterPro" id="IPR037278">
    <property type="entry name" value="ARFGAP/RecO"/>
</dbReference>
<dbReference type="InterPro" id="IPR022572">
    <property type="entry name" value="DNA_rep/recomb_RecO_N"/>
</dbReference>
<dbReference type="InterPro" id="IPR012340">
    <property type="entry name" value="NA-bd_OB-fold"/>
</dbReference>
<dbReference type="InterPro" id="IPR003717">
    <property type="entry name" value="RecO"/>
</dbReference>
<dbReference type="InterPro" id="IPR042242">
    <property type="entry name" value="RecO_C"/>
</dbReference>
<dbReference type="NCBIfam" id="TIGR00613">
    <property type="entry name" value="reco"/>
    <property type="match status" value="1"/>
</dbReference>
<dbReference type="PANTHER" id="PTHR33991">
    <property type="entry name" value="DNA REPAIR PROTEIN RECO"/>
    <property type="match status" value="1"/>
</dbReference>
<dbReference type="PANTHER" id="PTHR33991:SF1">
    <property type="entry name" value="DNA REPAIR PROTEIN RECO"/>
    <property type="match status" value="1"/>
</dbReference>
<dbReference type="Pfam" id="PF02565">
    <property type="entry name" value="RecO_C"/>
    <property type="match status" value="1"/>
</dbReference>
<dbReference type="Pfam" id="PF11967">
    <property type="entry name" value="RecO_N"/>
    <property type="match status" value="1"/>
</dbReference>
<dbReference type="SUPFAM" id="SSF57863">
    <property type="entry name" value="ArfGap/RecO-like zinc finger"/>
    <property type="match status" value="1"/>
</dbReference>
<dbReference type="SUPFAM" id="SSF50249">
    <property type="entry name" value="Nucleic acid-binding proteins"/>
    <property type="match status" value="1"/>
</dbReference>